<accession>A4QK68</accession>
<sequence>MAVPKKRTSISKKRIRKKNWKRKGYWTSLKAFSLGKSLSTGNSKSFFVQQNK</sequence>
<keyword id="KW-0150">Chloroplast</keyword>
<keyword id="KW-0934">Plastid</keyword>
<keyword id="KW-0687">Ribonucleoprotein</keyword>
<keyword id="KW-0689">Ribosomal protein</keyword>
<protein>
    <recommendedName>
        <fullName evidence="1">Large ribosomal subunit protein bL32c</fullName>
    </recommendedName>
    <alternativeName>
        <fullName evidence="2">50S ribosomal protein L32, chloroplastic</fullName>
    </alternativeName>
</protein>
<feature type="chain" id="PRO_0000296607" description="Large ribosomal subunit protein bL32c">
    <location>
        <begin position="1"/>
        <end position="52"/>
    </location>
</feature>
<organism>
    <name type="scientific">Arabis hirsuta</name>
    <name type="common">Hairy rock-cress</name>
    <name type="synonym">Turritis hirsuta</name>
    <dbReference type="NCBI Taxonomy" id="78191"/>
    <lineage>
        <taxon>Eukaryota</taxon>
        <taxon>Viridiplantae</taxon>
        <taxon>Streptophyta</taxon>
        <taxon>Embryophyta</taxon>
        <taxon>Tracheophyta</taxon>
        <taxon>Spermatophyta</taxon>
        <taxon>Magnoliopsida</taxon>
        <taxon>eudicotyledons</taxon>
        <taxon>Gunneridae</taxon>
        <taxon>Pentapetalae</taxon>
        <taxon>rosids</taxon>
        <taxon>malvids</taxon>
        <taxon>Brassicales</taxon>
        <taxon>Brassicaceae</taxon>
        <taxon>Arabideae</taxon>
        <taxon>Arabis</taxon>
    </lineage>
</organism>
<comment type="subcellular location">
    <subcellularLocation>
        <location>Plastid</location>
        <location>Chloroplast</location>
    </subcellularLocation>
</comment>
<comment type="similarity">
    <text evidence="1">Belongs to the bacterial ribosomal protein bL32 family.</text>
</comment>
<reference key="1">
    <citation type="submission" date="2007-03" db="EMBL/GenBank/DDBJ databases">
        <title>Sequencing analysis of Arabis hirsuta chloroplast DNA.</title>
        <authorList>
            <person name="Hosouchi T."/>
            <person name="Tsuruoka H."/>
            <person name="Kotani H."/>
        </authorList>
    </citation>
    <scope>NUCLEOTIDE SEQUENCE [LARGE SCALE GENOMIC DNA]</scope>
</reference>
<name>RK32_ARAHI</name>
<evidence type="ECO:0000255" key="1">
    <source>
        <dbReference type="HAMAP-Rule" id="MF_00340"/>
    </source>
</evidence>
<evidence type="ECO:0000305" key="2"/>
<gene>
    <name evidence="1" type="primary">rpl32</name>
</gene>
<geneLocation type="chloroplast"/>
<dbReference type="EMBL" id="AP009369">
    <property type="protein sequence ID" value="BAF50073.1"/>
    <property type="molecule type" value="Genomic_DNA"/>
</dbReference>
<dbReference type="RefSeq" id="YP_001123248.1">
    <property type="nucleotide sequence ID" value="NC_009268.1"/>
</dbReference>
<dbReference type="SMR" id="A4QK68"/>
<dbReference type="GeneID" id="4962500"/>
<dbReference type="GO" id="GO:0009507">
    <property type="term" value="C:chloroplast"/>
    <property type="evidence" value="ECO:0007669"/>
    <property type="project" value="UniProtKB-SubCell"/>
</dbReference>
<dbReference type="GO" id="GO:0015934">
    <property type="term" value="C:large ribosomal subunit"/>
    <property type="evidence" value="ECO:0007669"/>
    <property type="project" value="InterPro"/>
</dbReference>
<dbReference type="GO" id="GO:0003735">
    <property type="term" value="F:structural constituent of ribosome"/>
    <property type="evidence" value="ECO:0007669"/>
    <property type="project" value="InterPro"/>
</dbReference>
<dbReference type="GO" id="GO:0006412">
    <property type="term" value="P:translation"/>
    <property type="evidence" value="ECO:0007669"/>
    <property type="project" value="UniProtKB-UniRule"/>
</dbReference>
<dbReference type="HAMAP" id="MF_00340">
    <property type="entry name" value="Ribosomal_bL32"/>
    <property type="match status" value="1"/>
</dbReference>
<dbReference type="InterPro" id="IPR002677">
    <property type="entry name" value="Ribosomal_bL32"/>
</dbReference>
<dbReference type="InterPro" id="IPR044958">
    <property type="entry name" value="Ribosomal_bL32_plant/cyanobact"/>
</dbReference>
<dbReference type="InterPro" id="IPR011332">
    <property type="entry name" value="Ribosomal_zn-bd"/>
</dbReference>
<dbReference type="PANTHER" id="PTHR36083">
    <property type="entry name" value="50S RIBOSOMAL PROTEIN L32, CHLOROPLASTIC"/>
    <property type="match status" value="1"/>
</dbReference>
<dbReference type="PANTHER" id="PTHR36083:SF1">
    <property type="entry name" value="LARGE RIBOSOMAL SUBUNIT PROTEIN BL32C"/>
    <property type="match status" value="1"/>
</dbReference>
<dbReference type="Pfam" id="PF01783">
    <property type="entry name" value="Ribosomal_L32p"/>
    <property type="match status" value="1"/>
</dbReference>
<dbReference type="SUPFAM" id="SSF57829">
    <property type="entry name" value="Zn-binding ribosomal proteins"/>
    <property type="match status" value="1"/>
</dbReference>
<proteinExistence type="inferred from homology"/>